<comment type="function">
    <text evidence="1">Catalyzes the facilitated diffusion of 2-acyl-glycero-3-phosphoethanolamine (2-acyl-GPE) into the cell.</text>
</comment>
<comment type="subcellular location">
    <subcellularLocation>
        <location evidence="1">Cell inner membrane</location>
        <topology evidence="1">Multi-pass membrane protein</topology>
    </subcellularLocation>
</comment>
<comment type="similarity">
    <text evidence="1">Belongs to the major facilitator superfamily. LplT (TC 2.A.1.42) family.</text>
</comment>
<sequence length="397" mass="41874">MRESAHTNTSLWSKGMMAVTSAQFLSAFGDNALLFATLALLKAEFYPDWSQPILQMVFVGAYILFAPFVGQVADSFPKGRVMMFANSLKLLGAASICFGFNPFIGYTLVGIGAAAYSPAKYGILGELTTGDKLVKANGLMESSTIAAILLGSVAGGVLADWHVLAALGICAVVYAGAVVANLFIPTLPVARPGQSWRFTPMTSSFFNACRVLWRDGETRFSLIGTSMFWGAGVTLRFLLVLWVPTALGITDNATPTYLNAMVAVGIVVGAGAAAKLVTLETVRRCMPAGILIGVGVLFFSLQHALLPAYGLLILIGILGGFFIVPLNALLQERGKHTVGAGNAIAVQNLGENTAMLLMLGLYSLAVKAGLPVVGIGVGFGALFALAITGLWIWQRRR</sequence>
<keyword id="KW-0997">Cell inner membrane</keyword>
<keyword id="KW-1003">Cell membrane</keyword>
<keyword id="KW-0445">Lipid transport</keyword>
<keyword id="KW-0472">Membrane</keyword>
<keyword id="KW-0812">Transmembrane</keyword>
<keyword id="KW-1133">Transmembrane helix</keyword>
<keyword id="KW-0813">Transport</keyword>
<organism>
    <name type="scientific">Enterobacter sp. (strain 638)</name>
    <dbReference type="NCBI Taxonomy" id="399742"/>
    <lineage>
        <taxon>Bacteria</taxon>
        <taxon>Pseudomonadati</taxon>
        <taxon>Pseudomonadota</taxon>
        <taxon>Gammaproteobacteria</taxon>
        <taxon>Enterobacterales</taxon>
        <taxon>Enterobacteriaceae</taxon>
        <taxon>Enterobacter</taxon>
    </lineage>
</organism>
<evidence type="ECO:0000255" key="1">
    <source>
        <dbReference type="HAMAP-Rule" id="MF_01585"/>
    </source>
</evidence>
<gene>
    <name evidence="1" type="primary">lplT</name>
    <name type="ordered locus">Ent638_3276</name>
</gene>
<name>LPLT_ENT38</name>
<feature type="chain" id="PRO_1000069310" description="Lysophospholipid transporter LplT">
    <location>
        <begin position="1"/>
        <end position="397"/>
    </location>
</feature>
<feature type="transmembrane region" description="Helical" evidence="1">
    <location>
        <begin position="21"/>
        <end position="41"/>
    </location>
</feature>
<feature type="transmembrane region" description="Helical" evidence="1">
    <location>
        <begin position="53"/>
        <end position="73"/>
    </location>
</feature>
<feature type="transmembrane region" description="Helical" evidence="1">
    <location>
        <begin position="91"/>
        <end position="111"/>
    </location>
</feature>
<feature type="transmembrane region" description="Helical" evidence="1">
    <location>
        <begin position="139"/>
        <end position="159"/>
    </location>
</feature>
<feature type="transmembrane region" description="Helical" evidence="1">
    <location>
        <begin position="164"/>
        <end position="184"/>
    </location>
</feature>
<feature type="transmembrane region" description="Helical" evidence="1">
    <location>
        <begin position="229"/>
        <end position="249"/>
    </location>
</feature>
<feature type="transmembrane region" description="Helical" evidence="1">
    <location>
        <begin position="257"/>
        <end position="277"/>
    </location>
</feature>
<feature type="transmembrane region" description="Helical" evidence="1">
    <location>
        <begin position="281"/>
        <end position="301"/>
    </location>
</feature>
<feature type="transmembrane region" description="Helical" evidence="1">
    <location>
        <begin position="304"/>
        <end position="324"/>
    </location>
</feature>
<feature type="transmembrane region" description="Helical" evidence="1">
    <location>
        <begin position="344"/>
        <end position="364"/>
    </location>
</feature>
<feature type="transmembrane region" description="Helical" evidence="1">
    <location>
        <begin position="372"/>
        <end position="392"/>
    </location>
</feature>
<dbReference type="EMBL" id="CP000653">
    <property type="protein sequence ID" value="ABP61940.1"/>
    <property type="molecule type" value="Genomic_DNA"/>
</dbReference>
<dbReference type="RefSeq" id="WP_015960269.1">
    <property type="nucleotide sequence ID" value="NC_009436.1"/>
</dbReference>
<dbReference type="SMR" id="A4WE10"/>
<dbReference type="STRING" id="399742.Ent638_3276"/>
<dbReference type="KEGG" id="ent:Ent638_3276"/>
<dbReference type="eggNOG" id="COG0477">
    <property type="taxonomic scope" value="Bacteria"/>
</dbReference>
<dbReference type="HOGENOM" id="CLU_047399_0_0_6"/>
<dbReference type="OrthoDB" id="9803968at2"/>
<dbReference type="Proteomes" id="UP000000230">
    <property type="component" value="Chromosome"/>
</dbReference>
<dbReference type="GO" id="GO:0005886">
    <property type="term" value="C:plasma membrane"/>
    <property type="evidence" value="ECO:0007669"/>
    <property type="project" value="UniProtKB-SubCell"/>
</dbReference>
<dbReference type="GO" id="GO:0051978">
    <property type="term" value="F:lysophospholipid:sodium symporter activity"/>
    <property type="evidence" value="ECO:0007669"/>
    <property type="project" value="InterPro"/>
</dbReference>
<dbReference type="CDD" id="cd06173">
    <property type="entry name" value="MFS_MefA_like"/>
    <property type="match status" value="1"/>
</dbReference>
<dbReference type="Gene3D" id="1.20.1250.20">
    <property type="entry name" value="MFS general substrate transporter like domains"/>
    <property type="match status" value="1"/>
</dbReference>
<dbReference type="HAMAP" id="MF_01585">
    <property type="entry name" value="MFS_LplT"/>
    <property type="match status" value="1"/>
</dbReference>
<dbReference type="InterPro" id="IPR023727">
    <property type="entry name" value="LysoPLipid__transptr_LplT"/>
</dbReference>
<dbReference type="InterPro" id="IPR011701">
    <property type="entry name" value="MFS"/>
</dbReference>
<dbReference type="InterPro" id="IPR036259">
    <property type="entry name" value="MFS_trans_sf"/>
</dbReference>
<dbReference type="NCBIfam" id="NF008397">
    <property type="entry name" value="PRK11195.1"/>
    <property type="match status" value="1"/>
</dbReference>
<dbReference type="PANTHER" id="PTHR43266">
    <property type="entry name" value="MACROLIDE-EFFLUX PROTEIN"/>
    <property type="match status" value="1"/>
</dbReference>
<dbReference type="PANTHER" id="PTHR43266:SF2">
    <property type="entry name" value="MAJOR FACILITATOR SUPERFAMILY (MFS) PROFILE DOMAIN-CONTAINING PROTEIN"/>
    <property type="match status" value="1"/>
</dbReference>
<dbReference type="Pfam" id="PF07690">
    <property type="entry name" value="MFS_1"/>
    <property type="match status" value="1"/>
</dbReference>
<dbReference type="SUPFAM" id="SSF103473">
    <property type="entry name" value="MFS general substrate transporter"/>
    <property type="match status" value="1"/>
</dbReference>
<protein>
    <recommendedName>
        <fullName evidence="1">Lysophospholipid transporter LplT</fullName>
    </recommendedName>
</protein>
<proteinExistence type="inferred from homology"/>
<accession>A4WE10</accession>
<reference key="1">
    <citation type="journal article" date="2010" name="PLoS Genet.">
        <title>Genome sequence of the plant growth promoting endophytic bacterium Enterobacter sp. 638.</title>
        <authorList>
            <person name="Taghavi S."/>
            <person name="van der Lelie D."/>
            <person name="Hoffman A."/>
            <person name="Zhang Y.B."/>
            <person name="Walla M.D."/>
            <person name="Vangronsveld J."/>
            <person name="Newman L."/>
            <person name="Monchy S."/>
        </authorList>
    </citation>
    <scope>NUCLEOTIDE SEQUENCE [LARGE SCALE GENOMIC DNA]</scope>
    <source>
        <strain>638</strain>
    </source>
</reference>